<accession>C1ALX4</accession>
<gene>
    <name evidence="1" type="primary">mscL</name>
    <name type="ordered locus">JTY_1012</name>
</gene>
<reference key="1">
    <citation type="journal article" date="2009" name="Vaccine">
        <title>Whole genome sequence analysis of Mycobacterium bovis bacillus Calmette-Guerin (BCG) Tokyo 172: a comparative study of BCG vaccine substrains.</title>
        <authorList>
            <person name="Seki M."/>
            <person name="Honda I."/>
            <person name="Fujita I."/>
            <person name="Yano I."/>
            <person name="Yamamoto S."/>
            <person name="Koyama A."/>
        </authorList>
    </citation>
    <scope>NUCLEOTIDE SEQUENCE [LARGE SCALE GENOMIC DNA]</scope>
    <source>
        <strain>BCG / Tokyo 172 / ATCC 35737 / TMC 1019</strain>
    </source>
</reference>
<feature type="chain" id="PRO_1000191380" description="Large-conductance mechanosensitive channel">
    <location>
        <begin position="1"/>
        <end position="151"/>
    </location>
</feature>
<feature type="transmembrane region" description="Helical" evidence="1">
    <location>
        <begin position="12"/>
        <end position="32"/>
    </location>
</feature>
<feature type="transmembrane region" description="Helical" evidence="1">
    <location>
        <begin position="71"/>
        <end position="91"/>
    </location>
</feature>
<feature type="region of interest" description="Disordered" evidence="2">
    <location>
        <begin position="122"/>
        <end position="151"/>
    </location>
</feature>
<proteinExistence type="inferred from homology"/>
<organism>
    <name type="scientific">Mycobacterium bovis (strain BCG / Tokyo 172 / ATCC 35737 / TMC 1019)</name>
    <dbReference type="NCBI Taxonomy" id="561275"/>
    <lineage>
        <taxon>Bacteria</taxon>
        <taxon>Bacillati</taxon>
        <taxon>Actinomycetota</taxon>
        <taxon>Actinomycetes</taxon>
        <taxon>Mycobacteriales</taxon>
        <taxon>Mycobacteriaceae</taxon>
        <taxon>Mycobacterium</taxon>
        <taxon>Mycobacterium tuberculosis complex</taxon>
    </lineage>
</organism>
<dbReference type="EMBL" id="AP010918">
    <property type="protein sequence ID" value="BAH25303.1"/>
    <property type="molecule type" value="Genomic_DNA"/>
</dbReference>
<dbReference type="RefSeq" id="WP_011799144.1">
    <property type="nucleotide sequence ID" value="NZ_CP014566.1"/>
</dbReference>
<dbReference type="SMR" id="C1ALX4"/>
<dbReference type="KEGG" id="mbt:JTY_1012"/>
<dbReference type="HOGENOM" id="CLU_095787_1_1_11"/>
<dbReference type="GO" id="GO:0005886">
    <property type="term" value="C:plasma membrane"/>
    <property type="evidence" value="ECO:0007669"/>
    <property type="project" value="UniProtKB-SubCell"/>
</dbReference>
<dbReference type="GO" id="GO:0008381">
    <property type="term" value="F:mechanosensitive monoatomic ion channel activity"/>
    <property type="evidence" value="ECO:0007669"/>
    <property type="project" value="UniProtKB-UniRule"/>
</dbReference>
<dbReference type="FunFam" id="1.10.1200.120:FF:000006">
    <property type="entry name" value="Large-conductance mechanosensitive channel"/>
    <property type="match status" value="1"/>
</dbReference>
<dbReference type="Gene3D" id="1.20.5.220">
    <property type="match status" value="1"/>
</dbReference>
<dbReference type="Gene3D" id="1.10.1200.120">
    <property type="entry name" value="Large-conductance mechanosensitive channel, MscL, domain 1"/>
    <property type="match status" value="1"/>
</dbReference>
<dbReference type="HAMAP" id="MF_00115">
    <property type="entry name" value="MscL"/>
    <property type="match status" value="1"/>
</dbReference>
<dbReference type="InterPro" id="IPR019823">
    <property type="entry name" value="Mechanosensitive_channel_CS"/>
</dbReference>
<dbReference type="InterPro" id="IPR001185">
    <property type="entry name" value="MS_channel"/>
</dbReference>
<dbReference type="InterPro" id="IPR037673">
    <property type="entry name" value="MSC/AndL"/>
</dbReference>
<dbReference type="InterPro" id="IPR036019">
    <property type="entry name" value="MscL_channel"/>
</dbReference>
<dbReference type="NCBIfam" id="TIGR00220">
    <property type="entry name" value="mscL"/>
    <property type="match status" value="1"/>
</dbReference>
<dbReference type="NCBIfam" id="NF001842">
    <property type="entry name" value="PRK00567.1-3"/>
    <property type="match status" value="1"/>
</dbReference>
<dbReference type="PANTHER" id="PTHR30266:SF2">
    <property type="entry name" value="LARGE-CONDUCTANCE MECHANOSENSITIVE CHANNEL"/>
    <property type="match status" value="1"/>
</dbReference>
<dbReference type="PANTHER" id="PTHR30266">
    <property type="entry name" value="MECHANOSENSITIVE CHANNEL MSCL"/>
    <property type="match status" value="1"/>
</dbReference>
<dbReference type="Pfam" id="PF01741">
    <property type="entry name" value="MscL"/>
    <property type="match status" value="1"/>
</dbReference>
<dbReference type="PRINTS" id="PR01264">
    <property type="entry name" value="MECHCHANNEL"/>
</dbReference>
<dbReference type="SUPFAM" id="SSF81330">
    <property type="entry name" value="Gated mechanosensitive channel"/>
    <property type="match status" value="1"/>
</dbReference>
<dbReference type="PROSITE" id="PS01327">
    <property type="entry name" value="MSCL"/>
    <property type="match status" value="1"/>
</dbReference>
<keyword id="KW-1003">Cell membrane</keyword>
<keyword id="KW-0407">Ion channel</keyword>
<keyword id="KW-0406">Ion transport</keyword>
<keyword id="KW-0472">Membrane</keyword>
<keyword id="KW-0812">Transmembrane</keyword>
<keyword id="KW-1133">Transmembrane helix</keyword>
<keyword id="KW-0813">Transport</keyword>
<protein>
    <recommendedName>
        <fullName evidence="1">Large-conductance mechanosensitive channel</fullName>
    </recommendedName>
</protein>
<name>MSCL_MYCBT</name>
<sequence length="151" mass="15980">MLKGFKEFLARGNIVDLAVAVVIGTAFTALVTKFTDSIITPLINRIGVNAQSDVGILRIGIGGGQTIDLNVLLSAAINFFLIAFAVYFLVVLPYNTLRKKGEVEQPGDTQVVLLTEIRDLLAQTNGDSPGRHGGRGTPSPTDGPLASTESQ</sequence>
<evidence type="ECO:0000255" key="1">
    <source>
        <dbReference type="HAMAP-Rule" id="MF_00115"/>
    </source>
</evidence>
<evidence type="ECO:0000256" key="2">
    <source>
        <dbReference type="SAM" id="MobiDB-lite"/>
    </source>
</evidence>
<comment type="function">
    <text evidence="1">Channel that opens in response to stretch forces in the membrane lipid bilayer. May participate in the regulation of osmotic pressure changes within the cell.</text>
</comment>
<comment type="subunit">
    <text evidence="1">Homopentamer.</text>
</comment>
<comment type="subcellular location">
    <subcellularLocation>
        <location evidence="1">Cell membrane</location>
        <topology evidence="1">Multi-pass membrane protein</topology>
    </subcellularLocation>
</comment>
<comment type="similarity">
    <text evidence="1">Belongs to the MscL family.</text>
</comment>